<evidence type="ECO:0000250" key="1">
    <source>
        <dbReference type="UniProtKB" id="P40351"/>
    </source>
</evidence>
<evidence type="ECO:0000255" key="2"/>
<evidence type="ECO:0000269" key="3">
    <source>
    </source>
</evidence>
<evidence type="ECO:0000305" key="4"/>
<evidence type="ECO:0000312" key="5">
    <source>
        <dbReference type="FlyBase" id="FBgn0029906"/>
    </source>
</evidence>
<sequence length="511" mass="57945">MKDLFWHLVGIATGLKILLIPAYHSTDFEVHRNWLAITHSLPLNQWYVDATSEWTLDYPPFFAYFEWLLSQVAKYVDPRMLVVDNLNYESKATVYFQRLSVIVTDLVYVLGVRSCLGSLGLGRDTQQFFAASMLLLLNVGLIFVDHIHFQYNGLLFGILLLSIGSLIRQRFLWSAFAFAVLLNFKHIFLYMAPAFGVYLLRFYCLEQASVVSAVGAVVKLLVVGLTPFAVSFGPFWQQLPQVLSRLFPFKRGLTHAYWAPNFWALYNAADKLAAGVLKVQDGGASTTSGLVQEVRHSVLPAITPPVTFALTALFMLPILVKLFRSAKKQSPLVFLRAVVLCGCSSFVFGWHVHEKAILMVLLPLCLLTLVNREDARYAYVLGIAGYFSLFPLLFDADLYIPRYSLYMSYVAMMYGQLYRIFPGFRGFHTLEWLYMLGFMAIPLYEHLLSFLLHLDQRLPFLPLLLTSVYSALGVLYFFGAYYLYALGISWGKVPIASSTSAAAVKRKRKTK</sequence>
<accession>Q9W3V8</accession>
<accession>Q058Z6</accession>
<protein>
    <recommendedName>
        <fullName>Probable dolichyl pyrophosphate Glc1Man9GlcNAc2 alpha-1,3-glucosyltransferase</fullName>
        <shortName>Dolichyl-P-Glc:Glc1Man9GlcNAc2-PP-dolichyl glucosyltransferase</shortName>
        <ecNumber>2.4.1.265</ecNumber>
    </recommendedName>
    <alternativeName>
        <fullName>Asparagine-linked glycosylation protein 8 homolog</fullName>
    </alternativeName>
    <alternativeName>
        <fullName>Dol-P-Glc:Glc(1)Man(9)GlcNAc(2)-PP-dolichyl alpha-1,3-glucosyltransferase</fullName>
    </alternativeName>
    <alternativeName>
        <fullName evidence="5">Protein xiantuan</fullName>
    </alternativeName>
</protein>
<reference key="1">
    <citation type="journal article" date="2000" name="Science">
        <title>The genome sequence of Drosophila melanogaster.</title>
        <authorList>
            <person name="Adams M.D."/>
            <person name="Celniker S.E."/>
            <person name="Holt R.A."/>
            <person name="Evans C.A."/>
            <person name="Gocayne J.D."/>
            <person name="Amanatides P.G."/>
            <person name="Scherer S.E."/>
            <person name="Li P.W."/>
            <person name="Hoskins R.A."/>
            <person name="Galle R.F."/>
            <person name="George R.A."/>
            <person name="Lewis S.E."/>
            <person name="Richards S."/>
            <person name="Ashburner M."/>
            <person name="Henderson S.N."/>
            <person name="Sutton G.G."/>
            <person name="Wortman J.R."/>
            <person name="Yandell M.D."/>
            <person name="Zhang Q."/>
            <person name="Chen L.X."/>
            <person name="Brandon R.C."/>
            <person name="Rogers Y.-H.C."/>
            <person name="Blazej R.G."/>
            <person name="Champe M."/>
            <person name="Pfeiffer B.D."/>
            <person name="Wan K.H."/>
            <person name="Doyle C."/>
            <person name="Baxter E.G."/>
            <person name="Helt G."/>
            <person name="Nelson C.R."/>
            <person name="Miklos G.L.G."/>
            <person name="Abril J.F."/>
            <person name="Agbayani A."/>
            <person name="An H.-J."/>
            <person name="Andrews-Pfannkoch C."/>
            <person name="Baldwin D."/>
            <person name="Ballew R.M."/>
            <person name="Basu A."/>
            <person name="Baxendale J."/>
            <person name="Bayraktaroglu L."/>
            <person name="Beasley E.M."/>
            <person name="Beeson K.Y."/>
            <person name="Benos P.V."/>
            <person name="Berman B.P."/>
            <person name="Bhandari D."/>
            <person name="Bolshakov S."/>
            <person name="Borkova D."/>
            <person name="Botchan M.R."/>
            <person name="Bouck J."/>
            <person name="Brokstein P."/>
            <person name="Brottier P."/>
            <person name="Burtis K.C."/>
            <person name="Busam D.A."/>
            <person name="Butler H."/>
            <person name="Cadieu E."/>
            <person name="Center A."/>
            <person name="Chandra I."/>
            <person name="Cherry J.M."/>
            <person name="Cawley S."/>
            <person name="Dahlke C."/>
            <person name="Davenport L.B."/>
            <person name="Davies P."/>
            <person name="de Pablos B."/>
            <person name="Delcher A."/>
            <person name="Deng Z."/>
            <person name="Mays A.D."/>
            <person name="Dew I."/>
            <person name="Dietz S.M."/>
            <person name="Dodson K."/>
            <person name="Doup L.E."/>
            <person name="Downes M."/>
            <person name="Dugan-Rocha S."/>
            <person name="Dunkov B.C."/>
            <person name="Dunn P."/>
            <person name="Durbin K.J."/>
            <person name="Evangelista C.C."/>
            <person name="Ferraz C."/>
            <person name="Ferriera S."/>
            <person name="Fleischmann W."/>
            <person name="Fosler C."/>
            <person name="Gabrielian A.E."/>
            <person name="Garg N.S."/>
            <person name="Gelbart W.M."/>
            <person name="Glasser K."/>
            <person name="Glodek A."/>
            <person name="Gong F."/>
            <person name="Gorrell J.H."/>
            <person name="Gu Z."/>
            <person name="Guan P."/>
            <person name="Harris M."/>
            <person name="Harris N.L."/>
            <person name="Harvey D.A."/>
            <person name="Heiman T.J."/>
            <person name="Hernandez J.R."/>
            <person name="Houck J."/>
            <person name="Hostin D."/>
            <person name="Houston K.A."/>
            <person name="Howland T.J."/>
            <person name="Wei M.-H."/>
            <person name="Ibegwam C."/>
            <person name="Jalali M."/>
            <person name="Kalush F."/>
            <person name="Karpen G.H."/>
            <person name="Ke Z."/>
            <person name="Kennison J.A."/>
            <person name="Ketchum K.A."/>
            <person name="Kimmel B.E."/>
            <person name="Kodira C.D."/>
            <person name="Kraft C.L."/>
            <person name="Kravitz S."/>
            <person name="Kulp D."/>
            <person name="Lai Z."/>
            <person name="Lasko P."/>
            <person name="Lei Y."/>
            <person name="Levitsky A.A."/>
            <person name="Li J.H."/>
            <person name="Li Z."/>
            <person name="Liang Y."/>
            <person name="Lin X."/>
            <person name="Liu X."/>
            <person name="Mattei B."/>
            <person name="McIntosh T.C."/>
            <person name="McLeod M.P."/>
            <person name="McPherson D."/>
            <person name="Merkulov G."/>
            <person name="Milshina N.V."/>
            <person name="Mobarry C."/>
            <person name="Morris J."/>
            <person name="Moshrefi A."/>
            <person name="Mount S.M."/>
            <person name="Moy M."/>
            <person name="Murphy B."/>
            <person name="Murphy L."/>
            <person name="Muzny D.M."/>
            <person name="Nelson D.L."/>
            <person name="Nelson D.R."/>
            <person name="Nelson K.A."/>
            <person name="Nixon K."/>
            <person name="Nusskern D.R."/>
            <person name="Pacleb J.M."/>
            <person name="Palazzolo M."/>
            <person name="Pittman G.S."/>
            <person name="Pan S."/>
            <person name="Pollard J."/>
            <person name="Puri V."/>
            <person name="Reese M.G."/>
            <person name="Reinert K."/>
            <person name="Remington K."/>
            <person name="Saunders R.D.C."/>
            <person name="Scheeler F."/>
            <person name="Shen H."/>
            <person name="Shue B.C."/>
            <person name="Siden-Kiamos I."/>
            <person name="Simpson M."/>
            <person name="Skupski M.P."/>
            <person name="Smith T.J."/>
            <person name="Spier E."/>
            <person name="Spradling A.C."/>
            <person name="Stapleton M."/>
            <person name="Strong R."/>
            <person name="Sun E."/>
            <person name="Svirskas R."/>
            <person name="Tector C."/>
            <person name="Turner R."/>
            <person name="Venter E."/>
            <person name="Wang A.H."/>
            <person name="Wang X."/>
            <person name="Wang Z.-Y."/>
            <person name="Wassarman D.A."/>
            <person name="Weinstock G.M."/>
            <person name="Weissenbach J."/>
            <person name="Williams S.M."/>
            <person name="Woodage T."/>
            <person name="Worley K.C."/>
            <person name="Wu D."/>
            <person name="Yang S."/>
            <person name="Yao Q.A."/>
            <person name="Ye J."/>
            <person name="Yeh R.-F."/>
            <person name="Zaveri J.S."/>
            <person name="Zhan M."/>
            <person name="Zhang G."/>
            <person name="Zhao Q."/>
            <person name="Zheng L."/>
            <person name="Zheng X.H."/>
            <person name="Zhong F.N."/>
            <person name="Zhong W."/>
            <person name="Zhou X."/>
            <person name="Zhu S.C."/>
            <person name="Zhu X."/>
            <person name="Smith H.O."/>
            <person name="Gibbs R.A."/>
            <person name="Myers E.W."/>
            <person name="Rubin G.M."/>
            <person name="Venter J.C."/>
        </authorList>
    </citation>
    <scope>NUCLEOTIDE SEQUENCE [LARGE SCALE GENOMIC DNA]</scope>
    <source>
        <strain>Berkeley</strain>
    </source>
</reference>
<reference key="2">
    <citation type="journal article" date="2002" name="Genome Biol.">
        <title>Annotation of the Drosophila melanogaster euchromatic genome: a systematic review.</title>
        <authorList>
            <person name="Misra S."/>
            <person name="Crosby M.A."/>
            <person name="Mungall C.J."/>
            <person name="Matthews B.B."/>
            <person name="Campbell K.S."/>
            <person name="Hradecky P."/>
            <person name="Huang Y."/>
            <person name="Kaminker J.S."/>
            <person name="Millburn G.H."/>
            <person name="Prochnik S.E."/>
            <person name="Smith C.D."/>
            <person name="Tupy J.L."/>
            <person name="Whitfield E.J."/>
            <person name="Bayraktaroglu L."/>
            <person name="Berman B.P."/>
            <person name="Bettencourt B.R."/>
            <person name="Celniker S.E."/>
            <person name="de Grey A.D.N.J."/>
            <person name="Drysdale R.A."/>
            <person name="Harris N.L."/>
            <person name="Richter J."/>
            <person name="Russo S."/>
            <person name="Schroeder A.J."/>
            <person name="Shu S.Q."/>
            <person name="Stapleton M."/>
            <person name="Yamada C."/>
            <person name="Ashburner M."/>
            <person name="Gelbart W.M."/>
            <person name="Rubin G.M."/>
            <person name="Lewis S.E."/>
        </authorList>
    </citation>
    <scope>GENOME REANNOTATION</scope>
    <source>
        <strain>Berkeley</strain>
    </source>
</reference>
<reference key="3">
    <citation type="journal article" date="2002" name="Genome Biol.">
        <title>A Drosophila full-length cDNA resource.</title>
        <authorList>
            <person name="Stapleton M."/>
            <person name="Carlson J.W."/>
            <person name="Brokstein P."/>
            <person name="Yu C."/>
            <person name="Champe M."/>
            <person name="George R.A."/>
            <person name="Guarin H."/>
            <person name="Kronmiller B."/>
            <person name="Pacleb J.M."/>
            <person name="Park S."/>
            <person name="Wan K.H."/>
            <person name="Rubin G.M."/>
            <person name="Celniker S.E."/>
        </authorList>
    </citation>
    <scope>NUCLEOTIDE SEQUENCE [LARGE SCALE MRNA]</scope>
    <source>
        <strain>Berkeley</strain>
        <tissue>Embryo</tissue>
    </source>
</reference>
<reference key="4">
    <citation type="journal article" date="2014" name="Dev. Biol.">
        <title>The glucosyltransferase Xiantuan of the endoplasmic reticulum specifically affects E-Cadherin expression and is required for gastrulation movements in Drosophila.</title>
        <authorList>
            <person name="Zhang Y."/>
            <person name="Kong D."/>
            <person name="Reichl L."/>
            <person name="Vogt N."/>
            <person name="Wolf F."/>
            <person name="Grosshans J."/>
        </authorList>
    </citation>
    <scope>FUNCTION</scope>
    <scope>SUBCELLULAR LOCATION</scope>
</reference>
<feature type="chain" id="PRO_0000174165" description="Probable dolichyl pyrophosphate Glc1Man9GlcNAc2 alpha-1,3-glucosyltransferase">
    <location>
        <begin position="1"/>
        <end position="511"/>
    </location>
</feature>
<feature type="transmembrane region" description="Helical" evidence="2">
    <location>
        <begin position="4"/>
        <end position="24"/>
    </location>
</feature>
<feature type="transmembrane region" description="Helical" evidence="2">
    <location>
        <begin position="94"/>
        <end position="112"/>
    </location>
</feature>
<feature type="transmembrane region" description="Helical" evidence="2">
    <location>
        <begin position="124"/>
        <end position="144"/>
    </location>
</feature>
<feature type="transmembrane region" description="Helical" evidence="2">
    <location>
        <begin position="151"/>
        <end position="171"/>
    </location>
</feature>
<feature type="transmembrane region" description="Helical" evidence="2">
    <location>
        <begin position="210"/>
        <end position="230"/>
    </location>
</feature>
<feature type="transmembrane region" description="Helical" evidence="2">
    <location>
        <begin position="300"/>
        <end position="320"/>
    </location>
</feature>
<feature type="transmembrane region" description="Helical" evidence="2">
    <location>
        <begin position="332"/>
        <end position="352"/>
    </location>
</feature>
<feature type="transmembrane region" description="Helical" evidence="2">
    <location>
        <begin position="356"/>
        <end position="370"/>
    </location>
</feature>
<feature type="transmembrane region" description="Helical" evidence="2">
    <location>
        <begin position="377"/>
        <end position="394"/>
    </location>
</feature>
<feature type="transmembrane region" description="Helical" evidence="2">
    <location>
        <begin position="432"/>
        <end position="452"/>
    </location>
</feature>
<feature type="transmembrane region" description="Helical" evidence="2">
    <location>
        <begin position="469"/>
        <end position="491"/>
    </location>
</feature>
<dbReference type="EC" id="2.4.1.265"/>
<dbReference type="EMBL" id="AE014298">
    <property type="protein sequence ID" value="AAF46205.1"/>
    <property type="molecule type" value="Genomic_DNA"/>
</dbReference>
<dbReference type="EMBL" id="AY069662">
    <property type="protein sequence ID" value="AAL39807.1"/>
    <property type="molecule type" value="mRNA"/>
</dbReference>
<dbReference type="RefSeq" id="NP_572355.1">
    <property type="nucleotide sequence ID" value="NM_132127.4"/>
</dbReference>
<dbReference type="SMR" id="Q9W3V8"/>
<dbReference type="FunCoup" id="Q9W3V8">
    <property type="interactions" value="2107"/>
</dbReference>
<dbReference type="STRING" id="7227.FBpp0070931"/>
<dbReference type="CAZy" id="GT57">
    <property type="family name" value="Glycosyltransferase Family 57"/>
</dbReference>
<dbReference type="PaxDb" id="7227-FBpp0070931"/>
<dbReference type="DNASU" id="31623"/>
<dbReference type="EnsemblMetazoa" id="FBtr0070970">
    <property type="protein sequence ID" value="FBpp0070931"/>
    <property type="gene ID" value="FBgn0029906"/>
</dbReference>
<dbReference type="GeneID" id="31623"/>
<dbReference type="KEGG" id="dme:Dmel_CG4542"/>
<dbReference type="UCSC" id="CG4542-RA">
    <property type="organism name" value="d. melanogaster"/>
</dbReference>
<dbReference type="AGR" id="FB:FBgn0029906"/>
<dbReference type="CTD" id="31623"/>
<dbReference type="FlyBase" id="FBgn0029906">
    <property type="gene designation" value="xit"/>
</dbReference>
<dbReference type="VEuPathDB" id="VectorBase:FBgn0029906"/>
<dbReference type="eggNOG" id="KOG2576">
    <property type="taxonomic scope" value="Eukaryota"/>
</dbReference>
<dbReference type="GeneTree" id="ENSGT00940000153733"/>
<dbReference type="HOGENOM" id="CLU_022045_2_0_1"/>
<dbReference type="InParanoid" id="Q9W3V8"/>
<dbReference type="OMA" id="YLAPPFG"/>
<dbReference type="OrthoDB" id="1689333at2759"/>
<dbReference type="PhylomeDB" id="Q9W3V8"/>
<dbReference type="Reactome" id="R-DME-446193">
    <property type="pathway name" value="Biosynthesis of the N-glycan precursor (dolichol lipid-linked oligosaccharide, LLO) and transfer to a nascent protein"/>
</dbReference>
<dbReference type="UniPathway" id="UPA00378"/>
<dbReference type="BioGRID-ORCS" id="31623">
    <property type="hits" value="0 hits in 1 CRISPR screen"/>
</dbReference>
<dbReference type="GenomeRNAi" id="31623"/>
<dbReference type="PRO" id="PR:Q9W3V8"/>
<dbReference type="Proteomes" id="UP000000803">
    <property type="component" value="Chromosome X"/>
</dbReference>
<dbReference type="Bgee" id="FBgn0029906">
    <property type="expression patterns" value="Expressed in adult posterior midgut class II enteroendocrine cell in adult midgut (Drosophila) and 35 other cell types or tissues"/>
</dbReference>
<dbReference type="GO" id="GO:0005783">
    <property type="term" value="C:endoplasmic reticulum"/>
    <property type="evidence" value="ECO:0000314"/>
    <property type="project" value="FlyBase"/>
</dbReference>
<dbReference type="GO" id="GO:0005789">
    <property type="term" value="C:endoplasmic reticulum membrane"/>
    <property type="evidence" value="ECO:0000250"/>
    <property type="project" value="FlyBase"/>
</dbReference>
<dbReference type="GO" id="GO:0042283">
    <property type="term" value="F:dolichyl pyrophosphate Glc1Man9GlcNAc2 alpha-1,3-glucosyltransferase activity"/>
    <property type="evidence" value="ECO:0000250"/>
    <property type="project" value="FlyBase"/>
</dbReference>
<dbReference type="GO" id="GO:0003384">
    <property type="term" value="P:apical constriction involved in gastrulation"/>
    <property type="evidence" value="ECO:0000315"/>
    <property type="project" value="FlyBase"/>
</dbReference>
<dbReference type="GO" id="GO:0006488">
    <property type="term" value="P:dolichol-linked oligosaccharide biosynthetic process"/>
    <property type="evidence" value="ECO:0000250"/>
    <property type="project" value="FlyBase"/>
</dbReference>
<dbReference type="GO" id="GO:0007377">
    <property type="term" value="P:germ-band extension"/>
    <property type="evidence" value="ECO:0000315"/>
    <property type="project" value="FlyBase"/>
</dbReference>
<dbReference type="GO" id="GO:0006486">
    <property type="term" value="P:protein glycosylation"/>
    <property type="evidence" value="ECO:0000315"/>
    <property type="project" value="FlyBase"/>
</dbReference>
<dbReference type="GO" id="GO:0006487">
    <property type="term" value="P:protein N-linked glycosylation"/>
    <property type="evidence" value="ECO:0000250"/>
    <property type="project" value="FlyBase"/>
</dbReference>
<dbReference type="InterPro" id="IPR004856">
    <property type="entry name" value="Glyco_trans_ALG6/ALG8"/>
</dbReference>
<dbReference type="PANTHER" id="PTHR12413">
    <property type="entry name" value="DOLICHYL GLYCOSYLTRANSFERASE"/>
    <property type="match status" value="1"/>
</dbReference>
<dbReference type="PANTHER" id="PTHR12413:SF2">
    <property type="entry name" value="DOLICHYL PYROPHOSPHATE GLC1MAN9GLCNAC2 ALPHA-1,3-GLUCOSYLTRANSFERASE-RELATED"/>
    <property type="match status" value="1"/>
</dbReference>
<dbReference type="Pfam" id="PF03155">
    <property type="entry name" value="Alg6_Alg8"/>
    <property type="match status" value="1"/>
</dbReference>
<proteinExistence type="evidence at transcript level"/>
<comment type="function">
    <text evidence="1 3">Adds the second glucose residue to the lipid-linked oligosaccharide precursor for N-linked glycosylation. Transfers glucose from dolichyl phosphate glucose (Dol-P-Glc) onto the lipid-linked oligosaccharide Glc(1)Man(9)GlcNAc(2)-PP-Dol (By similarity). Functions in developmental processes such as germband extension, the apical constriction of mesoderm precursor cells and ventral furrow formation in early embryogenesis prior to gastrulation (PubMed:24681004). Involved in the glycosylation and intracellular distribution of shg (E-cadherin) (PubMed:24681004). Function in cell intercalation in the lateral epidermis during germband extension may be due to its effect on shg (PubMed:24681004).</text>
</comment>
<comment type="catalytic activity">
    <reaction>
        <text>an alpha-D-Glc-(1-&gt;3)-alpha-D-Man-(1-&gt;2)-alpha-D-Man-(1-&gt;2)-alpha-D-Man-(1-&gt;3)-[alpha-D-Man-(1-&gt;2)-alpha-D-Man-(1-&gt;3)-[alpha-D-Man-(1-&gt;2)-alpha-D-Man-(1-&gt;6)]-alpha-D-Man-(1-&gt;6)]-beta-D-Man-(1-&gt;4)-beta-D-GlcNAc-(1-&gt;4)-alpha-D-GlcNAc-diphospho-di-trans,poly-cis-dolichol + a di-trans,poly-cis-dolichyl beta-D-glucosyl phosphate = an alpha-D-Glc-(1-&gt;3)-alpha-D-Glc-(1-&gt;3)-alpha-D-Man-(1-&gt;2)-alpha-D-Man-(1-&gt;2)-alpha-D-Man-(1-&gt;3)-[alpha-D-Man-(1-&gt;2)-alpha-D-Man-(1-&gt;3)-[alpha-D-Man-(1-&gt;2)-alpha-D-Man-(1-&gt;6)]-alpha-D-Man-(1-&gt;6)]-beta-D-Man-(1-&gt;4)-beta-D-GlcNAc-(1-&gt;4)-alpha-D-GlcNAc-diphospho-di-trans,poly-cis-dolichol + a di-trans,poly-cis-dolichyl phosphate + H(+)</text>
        <dbReference type="Rhea" id="RHEA:31307"/>
        <dbReference type="Rhea" id="RHEA-COMP:19498"/>
        <dbReference type="Rhea" id="RHEA-COMP:19502"/>
        <dbReference type="Rhea" id="RHEA-COMP:19521"/>
        <dbReference type="Rhea" id="RHEA-COMP:19522"/>
        <dbReference type="ChEBI" id="CHEBI:15378"/>
        <dbReference type="ChEBI" id="CHEBI:57525"/>
        <dbReference type="ChEBI" id="CHEBI:57683"/>
        <dbReference type="ChEBI" id="CHEBI:132521"/>
        <dbReference type="ChEBI" id="CHEBI:132522"/>
        <dbReference type="EC" id="2.4.1.265"/>
    </reaction>
</comment>
<comment type="pathway">
    <text evidence="3">Protein modification; protein glycosylation.</text>
</comment>
<comment type="subcellular location">
    <subcellularLocation>
        <location evidence="3">Endoplasmic reticulum membrane</location>
        <topology evidence="1">Multi-pass membrane protein</topology>
    </subcellularLocation>
</comment>
<comment type="similarity">
    <text evidence="4">Belongs to the ALG6/ALG8 glucosyltransferase family.</text>
</comment>
<keyword id="KW-0256">Endoplasmic reticulum</keyword>
<keyword id="KW-0328">Glycosyltransferase</keyword>
<keyword id="KW-0472">Membrane</keyword>
<keyword id="KW-1185">Reference proteome</keyword>
<keyword id="KW-0808">Transferase</keyword>
<keyword id="KW-0812">Transmembrane</keyword>
<keyword id="KW-1133">Transmembrane helix</keyword>
<gene>
    <name evidence="5" type="primary">xit</name>
    <name evidence="5" type="ORF">CG4542</name>
</gene>
<name>ALG8_DROME</name>
<organism>
    <name type="scientific">Drosophila melanogaster</name>
    <name type="common">Fruit fly</name>
    <dbReference type="NCBI Taxonomy" id="7227"/>
    <lineage>
        <taxon>Eukaryota</taxon>
        <taxon>Metazoa</taxon>
        <taxon>Ecdysozoa</taxon>
        <taxon>Arthropoda</taxon>
        <taxon>Hexapoda</taxon>
        <taxon>Insecta</taxon>
        <taxon>Pterygota</taxon>
        <taxon>Neoptera</taxon>
        <taxon>Endopterygota</taxon>
        <taxon>Diptera</taxon>
        <taxon>Brachycera</taxon>
        <taxon>Muscomorpha</taxon>
        <taxon>Ephydroidea</taxon>
        <taxon>Drosophilidae</taxon>
        <taxon>Drosophila</taxon>
        <taxon>Sophophora</taxon>
    </lineage>
</organism>